<organism>
    <name type="scientific">Bacillus thuringiensis subsp. konkukian (strain 97-27)</name>
    <dbReference type="NCBI Taxonomy" id="281309"/>
    <lineage>
        <taxon>Bacteria</taxon>
        <taxon>Bacillati</taxon>
        <taxon>Bacillota</taxon>
        <taxon>Bacilli</taxon>
        <taxon>Bacillales</taxon>
        <taxon>Bacillaceae</taxon>
        <taxon>Bacillus</taxon>
        <taxon>Bacillus cereus group</taxon>
    </lineage>
</organism>
<gene>
    <name evidence="1" type="primary">lexA</name>
    <name type="ordered locus">BT9727_3444</name>
</gene>
<accession>Q6HFB0</accession>
<comment type="function">
    <text evidence="1">Represses a number of genes involved in the response to DNA damage (SOS response), including recA and lexA. In the presence of single-stranded DNA, RecA interacts with LexA causing an autocatalytic cleavage which disrupts the DNA-binding part of LexA, leading to derepression of the SOS regulon and eventually DNA repair.</text>
</comment>
<comment type="catalytic activity">
    <reaction evidence="1">
        <text>Hydrolysis of Ala-|-Gly bond in repressor LexA.</text>
        <dbReference type="EC" id="3.4.21.88"/>
    </reaction>
</comment>
<comment type="subunit">
    <text evidence="1">Homodimer.</text>
</comment>
<comment type="similarity">
    <text evidence="1">Belongs to the peptidase S24 family.</text>
</comment>
<evidence type="ECO:0000255" key="1">
    <source>
        <dbReference type="HAMAP-Rule" id="MF_00015"/>
    </source>
</evidence>
<proteinExistence type="inferred from homology"/>
<dbReference type="EC" id="3.4.21.88" evidence="1"/>
<dbReference type="EMBL" id="AE017355">
    <property type="protein sequence ID" value="AAT61456.1"/>
    <property type="molecule type" value="Genomic_DNA"/>
</dbReference>
<dbReference type="RefSeq" id="WP_000413738.1">
    <property type="nucleotide sequence ID" value="NC_005957.1"/>
</dbReference>
<dbReference type="RefSeq" id="YP_037766.1">
    <property type="nucleotide sequence ID" value="NC_005957.1"/>
</dbReference>
<dbReference type="SMR" id="Q6HFB0"/>
<dbReference type="MEROPS" id="S24.001"/>
<dbReference type="GeneID" id="93007490"/>
<dbReference type="KEGG" id="btk:BT9727_3444"/>
<dbReference type="PATRIC" id="fig|281309.8.peg.3679"/>
<dbReference type="HOGENOM" id="CLU_066192_45_1_9"/>
<dbReference type="BRENDA" id="3.4.21.88">
    <property type="organism ID" value="16990"/>
</dbReference>
<dbReference type="Proteomes" id="UP000001301">
    <property type="component" value="Chromosome"/>
</dbReference>
<dbReference type="GO" id="GO:0003677">
    <property type="term" value="F:DNA binding"/>
    <property type="evidence" value="ECO:0007669"/>
    <property type="project" value="UniProtKB-UniRule"/>
</dbReference>
<dbReference type="GO" id="GO:0004252">
    <property type="term" value="F:serine-type endopeptidase activity"/>
    <property type="evidence" value="ECO:0007669"/>
    <property type="project" value="UniProtKB-UniRule"/>
</dbReference>
<dbReference type="GO" id="GO:0006281">
    <property type="term" value="P:DNA repair"/>
    <property type="evidence" value="ECO:0007669"/>
    <property type="project" value="UniProtKB-UniRule"/>
</dbReference>
<dbReference type="GO" id="GO:0006260">
    <property type="term" value="P:DNA replication"/>
    <property type="evidence" value="ECO:0007669"/>
    <property type="project" value="UniProtKB-UniRule"/>
</dbReference>
<dbReference type="GO" id="GO:0045892">
    <property type="term" value="P:negative regulation of DNA-templated transcription"/>
    <property type="evidence" value="ECO:0007669"/>
    <property type="project" value="UniProtKB-UniRule"/>
</dbReference>
<dbReference type="GO" id="GO:0006508">
    <property type="term" value="P:proteolysis"/>
    <property type="evidence" value="ECO:0007669"/>
    <property type="project" value="InterPro"/>
</dbReference>
<dbReference type="GO" id="GO:0009432">
    <property type="term" value="P:SOS response"/>
    <property type="evidence" value="ECO:0007669"/>
    <property type="project" value="UniProtKB-UniRule"/>
</dbReference>
<dbReference type="CDD" id="cd00090">
    <property type="entry name" value="HTH_ARSR"/>
    <property type="match status" value="1"/>
</dbReference>
<dbReference type="CDD" id="cd06529">
    <property type="entry name" value="S24_LexA-like"/>
    <property type="match status" value="1"/>
</dbReference>
<dbReference type="FunFam" id="1.10.10.10:FF:000009">
    <property type="entry name" value="LexA repressor"/>
    <property type="match status" value="1"/>
</dbReference>
<dbReference type="FunFam" id="2.10.109.10:FF:000001">
    <property type="entry name" value="LexA repressor"/>
    <property type="match status" value="1"/>
</dbReference>
<dbReference type="Gene3D" id="2.10.109.10">
    <property type="entry name" value="Umud Fragment, subunit A"/>
    <property type="match status" value="1"/>
</dbReference>
<dbReference type="Gene3D" id="1.10.10.10">
    <property type="entry name" value="Winged helix-like DNA-binding domain superfamily/Winged helix DNA-binding domain"/>
    <property type="match status" value="1"/>
</dbReference>
<dbReference type="HAMAP" id="MF_00015">
    <property type="entry name" value="LexA"/>
    <property type="match status" value="1"/>
</dbReference>
<dbReference type="InterPro" id="IPR011991">
    <property type="entry name" value="ArsR-like_HTH"/>
</dbReference>
<dbReference type="InterPro" id="IPR006200">
    <property type="entry name" value="LexA"/>
</dbReference>
<dbReference type="InterPro" id="IPR039418">
    <property type="entry name" value="LexA-like"/>
</dbReference>
<dbReference type="InterPro" id="IPR036286">
    <property type="entry name" value="LexA/Signal_pep-like_sf"/>
</dbReference>
<dbReference type="InterPro" id="IPR006199">
    <property type="entry name" value="LexA_DNA-bd_dom"/>
</dbReference>
<dbReference type="InterPro" id="IPR050077">
    <property type="entry name" value="LexA_repressor"/>
</dbReference>
<dbReference type="InterPro" id="IPR006197">
    <property type="entry name" value="Peptidase_S24_LexA"/>
</dbReference>
<dbReference type="InterPro" id="IPR015927">
    <property type="entry name" value="Peptidase_S24_S26A/B/C"/>
</dbReference>
<dbReference type="InterPro" id="IPR036388">
    <property type="entry name" value="WH-like_DNA-bd_sf"/>
</dbReference>
<dbReference type="InterPro" id="IPR036390">
    <property type="entry name" value="WH_DNA-bd_sf"/>
</dbReference>
<dbReference type="NCBIfam" id="TIGR00498">
    <property type="entry name" value="lexA"/>
    <property type="match status" value="1"/>
</dbReference>
<dbReference type="PANTHER" id="PTHR33516">
    <property type="entry name" value="LEXA REPRESSOR"/>
    <property type="match status" value="1"/>
</dbReference>
<dbReference type="PANTHER" id="PTHR33516:SF2">
    <property type="entry name" value="LEXA REPRESSOR-RELATED"/>
    <property type="match status" value="1"/>
</dbReference>
<dbReference type="Pfam" id="PF01726">
    <property type="entry name" value="LexA_DNA_bind"/>
    <property type="match status" value="1"/>
</dbReference>
<dbReference type="Pfam" id="PF00717">
    <property type="entry name" value="Peptidase_S24"/>
    <property type="match status" value="1"/>
</dbReference>
<dbReference type="PRINTS" id="PR00726">
    <property type="entry name" value="LEXASERPTASE"/>
</dbReference>
<dbReference type="SUPFAM" id="SSF51306">
    <property type="entry name" value="LexA/Signal peptidase"/>
    <property type="match status" value="1"/>
</dbReference>
<dbReference type="SUPFAM" id="SSF46785">
    <property type="entry name" value="Winged helix' DNA-binding domain"/>
    <property type="match status" value="1"/>
</dbReference>
<sequence>MEKLTKRQQDILDFIKLKVQEKGYPPSVREIGQAVGLASSSTVHGHLSRLEEKGYIRRDPTKPRAIEILGEDRMDTETQSVIQVPIVGKVTAGLPITAVESVEEHFPLPASIVAGADQVFMLRISGDSMIEAGIFDGDLVVVRQQQSAYNGEIVVALTEDNEATVKRFYKEKDHFRLQPENSSLEPIILKQVSVIGKVIGVYRDLH</sequence>
<protein>
    <recommendedName>
        <fullName evidence="1">LexA repressor</fullName>
        <ecNumber evidence="1">3.4.21.88</ecNumber>
    </recommendedName>
</protein>
<reference key="1">
    <citation type="journal article" date="2006" name="J. Bacteriol.">
        <title>Pathogenomic sequence analysis of Bacillus cereus and Bacillus thuringiensis isolates closely related to Bacillus anthracis.</title>
        <authorList>
            <person name="Han C.S."/>
            <person name="Xie G."/>
            <person name="Challacombe J.F."/>
            <person name="Altherr M.R."/>
            <person name="Bhotika S.S."/>
            <person name="Bruce D."/>
            <person name="Campbell C.S."/>
            <person name="Campbell M.L."/>
            <person name="Chen J."/>
            <person name="Chertkov O."/>
            <person name="Cleland C."/>
            <person name="Dimitrijevic M."/>
            <person name="Doggett N.A."/>
            <person name="Fawcett J.J."/>
            <person name="Glavina T."/>
            <person name="Goodwin L.A."/>
            <person name="Hill K.K."/>
            <person name="Hitchcock P."/>
            <person name="Jackson P.J."/>
            <person name="Keim P."/>
            <person name="Kewalramani A.R."/>
            <person name="Longmire J."/>
            <person name="Lucas S."/>
            <person name="Malfatti S."/>
            <person name="McMurry K."/>
            <person name="Meincke L.J."/>
            <person name="Misra M."/>
            <person name="Moseman B.L."/>
            <person name="Mundt M."/>
            <person name="Munk A.C."/>
            <person name="Okinaka R.T."/>
            <person name="Parson-Quintana B."/>
            <person name="Reilly L.P."/>
            <person name="Richardson P."/>
            <person name="Robinson D.L."/>
            <person name="Rubin E."/>
            <person name="Saunders E."/>
            <person name="Tapia R."/>
            <person name="Tesmer J.G."/>
            <person name="Thayer N."/>
            <person name="Thompson L.S."/>
            <person name="Tice H."/>
            <person name="Ticknor L.O."/>
            <person name="Wills P.L."/>
            <person name="Brettin T.S."/>
            <person name="Gilna P."/>
        </authorList>
    </citation>
    <scope>NUCLEOTIDE SEQUENCE [LARGE SCALE GENOMIC DNA]</scope>
    <source>
        <strain>97-27</strain>
    </source>
</reference>
<keyword id="KW-0068">Autocatalytic cleavage</keyword>
<keyword id="KW-0227">DNA damage</keyword>
<keyword id="KW-0234">DNA repair</keyword>
<keyword id="KW-0235">DNA replication</keyword>
<keyword id="KW-0238">DNA-binding</keyword>
<keyword id="KW-0378">Hydrolase</keyword>
<keyword id="KW-0678">Repressor</keyword>
<keyword id="KW-0742">SOS response</keyword>
<keyword id="KW-0804">Transcription</keyword>
<keyword id="KW-0805">Transcription regulation</keyword>
<feature type="chain" id="PRO_0000170007" description="LexA repressor">
    <location>
        <begin position="1"/>
        <end position="206"/>
    </location>
</feature>
<feature type="DNA-binding region" description="H-T-H motif" evidence="1">
    <location>
        <begin position="28"/>
        <end position="48"/>
    </location>
</feature>
<feature type="active site" description="For autocatalytic cleavage activity" evidence="1">
    <location>
        <position position="128"/>
    </location>
</feature>
<feature type="active site" description="For autocatalytic cleavage activity" evidence="1">
    <location>
        <position position="166"/>
    </location>
</feature>
<feature type="site" description="Cleavage; by autolysis" evidence="1">
    <location>
        <begin position="92"/>
        <end position="93"/>
    </location>
</feature>
<name>LEXA_BACHK</name>